<name>EFG_BUCAI</name>
<protein>
    <recommendedName>
        <fullName>Elongation factor G</fullName>
        <shortName>EF-G</shortName>
    </recommendedName>
</protein>
<dbReference type="EMBL" id="BA000003">
    <property type="protein sequence ID" value="BAB13220.1"/>
    <property type="molecule type" value="Genomic_DNA"/>
</dbReference>
<dbReference type="RefSeq" id="NP_240334.1">
    <property type="nucleotide sequence ID" value="NC_002528.1"/>
</dbReference>
<dbReference type="RefSeq" id="WP_009874478.1">
    <property type="nucleotide sequence ID" value="NZ_AP036055.1"/>
</dbReference>
<dbReference type="SMR" id="P57593"/>
<dbReference type="STRING" id="563178.BUAP5A_520"/>
<dbReference type="EnsemblBacteria" id="BAB13220">
    <property type="protein sequence ID" value="BAB13220"/>
    <property type="gene ID" value="BAB13220"/>
</dbReference>
<dbReference type="KEGG" id="buc:BU527"/>
<dbReference type="PATRIC" id="fig|107806.10.peg.532"/>
<dbReference type="eggNOG" id="COG0480">
    <property type="taxonomic scope" value="Bacteria"/>
</dbReference>
<dbReference type="HOGENOM" id="CLU_002794_4_1_6"/>
<dbReference type="Proteomes" id="UP000001806">
    <property type="component" value="Chromosome"/>
</dbReference>
<dbReference type="GO" id="GO:0005737">
    <property type="term" value="C:cytoplasm"/>
    <property type="evidence" value="ECO:0007669"/>
    <property type="project" value="UniProtKB-SubCell"/>
</dbReference>
<dbReference type="GO" id="GO:0005525">
    <property type="term" value="F:GTP binding"/>
    <property type="evidence" value="ECO:0007669"/>
    <property type="project" value="UniProtKB-UniRule"/>
</dbReference>
<dbReference type="GO" id="GO:0003924">
    <property type="term" value="F:GTPase activity"/>
    <property type="evidence" value="ECO:0007669"/>
    <property type="project" value="InterPro"/>
</dbReference>
<dbReference type="GO" id="GO:0097216">
    <property type="term" value="F:guanosine tetraphosphate binding"/>
    <property type="evidence" value="ECO:0007669"/>
    <property type="project" value="UniProtKB-ARBA"/>
</dbReference>
<dbReference type="GO" id="GO:0003746">
    <property type="term" value="F:translation elongation factor activity"/>
    <property type="evidence" value="ECO:0007669"/>
    <property type="project" value="UniProtKB-UniRule"/>
</dbReference>
<dbReference type="GO" id="GO:0032790">
    <property type="term" value="P:ribosome disassembly"/>
    <property type="evidence" value="ECO:0007669"/>
    <property type="project" value="TreeGrafter"/>
</dbReference>
<dbReference type="CDD" id="cd01886">
    <property type="entry name" value="EF-G"/>
    <property type="match status" value="1"/>
</dbReference>
<dbReference type="CDD" id="cd16262">
    <property type="entry name" value="EFG_III"/>
    <property type="match status" value="1"/>
</dbReference>
<dbReference type="CDD" id="cd01434">
    <property type="entry name" value="EFG_mtEFG1_IV"/>
    <property type="match status" value="1"/>
</dbReference>
<dbReference type="CDD" id="cd03713">
    <property type="entry name" value="EFG_mtEFG_C"/>
    <property type="match status" value="1"/>
</dbReference>
<dbReference type="CDD" id="cd04088">
    <property type="entry name" value="EFG_mtEFG_II"/>
    <property type="match status" value="1"/>
</dbReference>
<dbReference type="FunFam" id="2.40.30.10:FF:000006">
    <property type="entry name" value="Elongation factor G"/>
    <property type="match status" value="1"/>
</dbReference>
<dbReference type="FunFam" id="3.30.230.10:FF:000003">
    <property type="entry name" value="Elongation factor G"/>
    <property type="match status" value="1"/>
</dbReference>
<dbReference type="FunFam" id="3.30.70.240:FF:000001">
    <property type="entry name" value="Elongation factor G"/>
    <property type="match status" value="1"/>
</dbReference>
<dbReference type="FunFam" id="3.30.70.870:FF:000001">
    <property type="entry name" value="Elongation factor G"/>
    <property type="match status" value="1"/>
</dbReference>
<dbReference type="FunFam" id="3.40.50.300:FF:000029">
    <property type="entry name" value="Elongation factor G"/>
    <property type="match status" value="1"/>
</dbReference>
<dbReference type="Gene3D" id="3.30.230.10">
    <property type="match status" value="1"/>
</dbReference>
<dbReference type="Gene3D" id="3.30.70.240">
    <property type="match status" value="1"/>
</dbReference>
<dbReference type="Gene3D" id="3.30.70.870">
    <property type="entry name" value="Elongation Factor G (Translational Gtpase), domain 3"/>
    <property type="match status" value="1"/>
</dbReference>
<dbReference type="Gene3D" id="3.40.50.300">
    <property type="entry name" value="P-loop containing nucleotide triphosphate hydrolases"/>
    <property type="match status" value="1"/>
</dbReference>
<dbReference type="Gene3D" id="2.40.30.10">
    <property type="entry name" value="Translation factors"/>
    <property type="match status" value="1"/>
</dbReference>
<dbReference type="HAMAP" id="MF_00054_B">
    <property type="entry name" value="EF_G_EF_2_B"/>
    <property type="match status" value="1"/>
</dbReference>
<dbReference type="InterPro" id="IPR041095">
    <property type="entry name" value="EFG_II"/>
</dbReference>
<dbReference type="InterPro" id="IPR009022">
    <property type="entry name" value="EFG_III"/>
</dbReference>
<dbReference type="InterPro" id="IPR035647">
    <property type="entry name" value="EFG_III/V"/>
</dbReference>
<dbReference type="InterPro" id="IPR047872">
    <property type="entry name" value="EFG_IV"/>
</dbReference>
<dbReference type="InterPro" id="IPR035649">
    <property type="entry name" value="EFG_V"/>
</dbReference>
<dbReference type="InterPro" id="IPR000640">
    <property type="entry name" value="EFG_V-like"/>
</dbReference>
<dbReference type="InterPro" id="IPR004161">
    <property type="entry name" value="EFTu-like_2"/>
</dbReference>
<dbReference type="InterPro" id="IPR031157">
    <property type="entry name" value="G_TR_CS"/>
</dbReference>
<dbReference type="InterPro" id="IPR027417">
    <property type="entry name" value="P-loop_NTPase"/>
</dbReference>
<dbReference type="InterPro" id="IPR020568">
    <property type="entry name" value="Ribosomal_Su5_D2-typ_SF"/>
</dbReference>
<dbReference type="InterPro" id="IPR014721">
    <property type="entry name" value="Ribsml_uS5_D2-typ_fold_subgr"/>
</dbReference>
<dbReference type="InterPro" id="IPR005225">
    <property type="entry name" value="Small_GTP-bd"/>
</dbReference>
<dbReference type="InterPro" id="IPR000795">
    <property type="entry name" value="T_Tr_GTP-bd_dom"/>
</dbReference>
<dbReference type="InterPro" id="IPR009000">
    <property type="entry name" value="Transl_B-barrel_sf"/>
</dbReference>
<dbReference type="InterPro" id="IPR004540">
    <property type="entry name" value="Transl_elong_EFG/EF2"/>
</dbReference>
<dbReference type="InterPro" id="IPR005517">
    <property type="entry name" value="Transl_elong_EFG/EF2_IV"/>
</dbReference>
<dbReference type="NCBIfam" id="TIGR00484">
    <property type="entry name" value="EF-G"/>
    <property type="match status" value="1"/>
</dbReference>
<dbReference type="NCBIfam" id="NF009381">
    <property type="entry name" value="PRK12740.1-5"/>
    <property type="match status" value="1"/>
</dbReference>
<dbReference type="NCBIfam" id="TIGR00231">
    <property type="entry name" value="small_GTP"/>
    <property type="match status" value="1"/>
</dbReference>
<dbReference type="PANTHER" id="PTHR43261:SF1">
    <property type="entry name" value="RIBOSOME-RELEASING FACTOR 2, MITOCHONDRIAL"/>
    <property type="match status" value="1"/>
</dbReference>
<dbReference type="PANTHER" id="PTHR43261">
    <property type="entry name" value="TRANSLATION ELONGATION FACTOR G-RELATED"/>
    <property type="match status" value="1"/>
</dbReference>
<dbReference type="Pfam" id="PF00679">
    <property type="entry name" value="EFG_C"/>
    <property type="match status" value="1"/>
</dbReference>
<dbReference type="Pfam" id="PF14492">
    <property type="entry name" value="EFG_III"/>
    <property type="match status" value="1"/>
</dbReference>
<dbReference type="Pfam" id="PF03764">
    <property type="entry name" value="EFG_IV"/>
    <property type="match status" value="1"/>
</dbReference>
<dbReference type="Pfam" id="PF00009">
    <property type="entry name" value="GTP_EFTU"/>
    <property type="match status" value="1"/>
</dbReference>
<dbReference type="Pfam" id="PF03144">
    <property type="entry name" value="GTP_EFTU_D2"/>
    <property type="match status" value="1"/>
</dbReference>
<dbReference type="PRINTS" id="PR00315">
    <property type="entry name" value="ELONGATNFCT"/>
</dbReference>
<dbReference type="SMART" id="SM00838">
    <property type="entry name" value="EFG_C"/>
    <property type="match status" value="1"/>
</dbReference>
<dbReference type="SMART" id="SM00889">
    <property type="entry name" value="EFG_IV"/>
    <property type="match status" value="1"/>
</dbReference>
<dbReference type="SUPFAM" id="SSF54980">
    <property type="entry name" value="EF-G C-terminal domain-like"/>
    <property type="match status" value="2"/>
</dbReference>
<dbReference type="SUPFAM" id="SSF52540">
    <property type="entry name" value="P-loop containing nucleoside triphosphate hydrolases"/>
    <property type="match status" value="1"/>
</dbReference>
<dbReference type="SUPFAM" id="SSF54211">
    <property type="entry name" value="Ribosomal protein S5 domain 2-like"/>
    <property type="match status" value="1"/>
</dbReference>
<dbReference type="SUPFAM" id="SSF50447">
    <property type="entry name" value="Translation proteins"/>
    <property type="match status" value="1"/>
</dbReference>
<dbReference type="PROSITE" id="PS00301">
    <property type="entry name" value="G_TR_1"/>
    <property type="match status" value="1"/>
</dbReference>
<dbReference type="PROSITE" id="PS51722">
    <property type="entry name" value="G_TR_2"/>
    <property type="match status" value="1"/>
</dbReference>
<accession>P57593</accession>
<reference key="1">
    <citation type="journal article" date="2000" name="Nature">
        <title>Genome sequence of the endocellular bacterial symbiont of aphids Buchnera sp. APS.</title>
        <authorList>
            <person name="Shigenobu S."/>
            <person name="Watanabe H."/>
            <person name="Hattori M."/>
            <person name="Sakaki Y."/>
            <person name="Ishikawa H."/>
        </authorList>
    </citation>
    <scope>NUCLEOTIDE SEQUENCE [LARGE SCALE GENOMIC DNA]</scope>
    <source>
        <strain>APS</strain>
    </source>
</reference>
<sequence>MSRTTPISRYRNIGISAHIDAGKTTTTERILFYTGINHKIGEVHDGAATMDWMEQEQERGITITSAATTTFWSGMAKQFKPHRINIIDTPGHVDFTIEVERSMRVLDGAVMVYCAVGGVQPQSETVWRQANKYNVPRIAFVNKMDRMGANFLKVVKQIKIRLGANPVPLQLAIGAEDTFVGVVDLIKMKAVHWKDSDQGVTFVYNDIPPEMIELSKKWNQNLIESAVESNEDLLEKYLNGDRLSESEIKSALRKRALNNEIVLITCGSAFKNKGVQALLDAIIEFLPAPNDIQDIKGILNDVEQTPAIRNSDDKAPFSALAFKIASDPFVGNLTFFRVYSGVVKSGDTVFNSAKSQRERFGRIVQMHANKREEIKEVYAGDIAAAIGLKDVTTGDTLCDLNDPIILERMEFPEPVISISVEPKTKVDQEKMGLALGRLAKEDPSFRVRTDQESNQTIISGMGELHLEIIIDRMKREFSVDANVGKPQVAYRETILNKVEDIEGKHIKQSGGRGQYGHVVIELFPLQPGGEGYLFVNDIKGGVIPSEYISAIDKGIQEQLKCGPLAGYPVVDIGVRLYFGSYHDVDSSELAFKLAASAAFKKGFKQAKPILLEPIMKVEVETPDDYMGDVIGDLNRRRGIIEGMKDLSISKIINACVPLSEMFGYATDLRSQTQGRASYSMEFLKYIEAPFNISKDIIERREK</sequence>
<proteinExistence type="inferred from homology"/>
<gene>
    <name type="primary">fusA</name>
    <name type="ordered locus">BU527</name>
</gene>
<organism>
    <name type="scientific">Buchnera aphidicola subsp. Acyrthosiphon pisum (strain APS)</name>
    <name type="common">Acyrthosiphon pisum symbiotic bacterium</name>
    <dbReference type="NCBI Taxonomy" id="107806"/>
    <lineage>
        <taxon>Bacteria</taxon>
        <taxon>Pseudomonadati</taxon>
        <taxon>Pseudomonadota</taxon>
        <taxon>Gammaproteobacteria</taxon>
        <taxon>Enterobacterales</taxon>
        <taxon>Erwiniaceae</taxon>
        <taxon>Buchnera</taxon>
    </lineage>
</organism>
<feature type="chain" id="PRO_0000091090" description="Elongation factor G">
    <location>
        <begin position="1"/>
        <end position="702"/>
    </location>
</feature>
<feature type="domain" description="tr-type G">
    <location>
        <begin position="8"/>
        <end position="290"/>
    </location>
</feature>
<feature type="binding site" evidence="1">
    <location>
        <begin position="17"/>
        <end position="24"/>
    </location>
    <ligand>
        <name>GTP</name>
        <dbReference type="ChEBI" id="CHEBI:37565"/>
    </ligand>
</feature>
<feature type="binding site" evidence="1">
    <location>
        <begin position="88"/>
        <end position="92"/>
    </location>
    <ligand>
        <name>GTP</name>
        <dbReference type="ChEBI" id="CHEBI:37565"/>
    </ligand>
</feature>
<feature type="binding site" evidence="1">
    <location>
        <begin position="142"/>
        <end position="145"/>
    </location>
    <ligand>
        <name>GTP</name>
        <dbReference type="ChEBI" id="CHEBI:37565"/>
    </ligand>
</feature>
<keyword id="KW-0963">Cytoplasm</keyword>
<keyword id="KW-0251">Elongation factor</keyword>
<keyword id="KW-0342">GTP-binding</keyword>
<keyword id="KW-0547">Nucleotide-binding</keyword>
<keyword id="KW-0648">Protein biosynthesis</keyword>
<keyword id="KW-1185">Reference proteome</keyword>
<comment type="function">
    <text evidence="1">Catalyzes the GTP-dependent ribosomal translocation step during translation elongation. During this step, the ribosome changes from the pre-translocational (PRE) to the post-translocational (POST) state as the newly formed A-site-bound peptidyl-tRNA and P-site-bound deacylated tRNA move to the P and E sites, respectively. Catalyzes the coordinated movement of the two tRNA molecules, the mRNA and conformational changes in the ribosome (By similarity).</text>
</comment>
<comment type="subcellular location">
    <subcellularLocation>
        <location evidence="1">Cytoplasm</location>
    </subcellularLocation>
</comment>
<comment type="similarity">
    <text evidence="2">Belongs to the TRAFAC class translation factor GTPase superfamily. Classic translation factor GTPase family. EF-G/EF-2 subfamily.</text>
</comment>
<evidence type="ECO:0000250" key="1"/>
<evidence type="ECO:0000305" key="2"/>